<sequence>MLLRKGTVYVLVIRADLVNAMVAHARRDHPDEACGVLAGPEGSDRPERHIPMTNAERSPTFYRLDSGEQLKVWRAMEDADEVPVVIYHSHTATEAYPSRTDVKLATEPDAHYVLVSTRDPHRHELRSYRIVDGAVTEEPVNVVEQY</sequence>
<reference key="1">
    <citation type="journal article" date="2003" name="Proc. Natl. Acad. Sci. U.S.A.">
        <title>The complete genome sequence of Mycobacterium bovis.</title>
        <authorList>
            <person name="Garnier T."/>
            <person name="Eiglmeier K."/>
            <person name="Camus J.-C."/>
            <person name="Medina N."/>
            <person name="Mansoor H."/>
            <person name="Pryor M."/>
            <person name="Duthoy S."/>
            <person name="Grondin S."/>
            <person name="Lacroix C."/>
            <person name="Monsempe C."/>
            <person name="Simon S."/>
            <person name="Harris B."/>
            <person name="Atkin R."/>
            <person name="Doggett J."/>
            <person name="Mayes R."/>
            <person name="Keating L."/>
            <person name="Wheeler P.R."/>
            <person name="Parkhill J."/>
            <person name="Barrell B.G."/>
            <person name="Cole S.T."/>
            <person name="Gordon S.V."/>
            <person name="Hewinson R.G."/>
        </authorList>
    </citation>
    <scope>NUCLEOTIDE SEQUENCE [LARGE SCALE GENOMIC DNA]</scope>
    <source>
        <strain>ATCC BAA-935 / AF2122/97</strain>
    </source>
</reference>
<reference key="2">
    <citation type="journal article" date="2017" name="Genome Announc.">
        <title>Updated reference genome sequence and annotation of Mycobacterium bovis AF2122/97.</title>
        <authorList>
            <person name="Malone K.M."/>
            <person name="Farrell D."/>
            <person name="Stuber T.P."/>
            <person name="Schubert O.T."/>
            <person name="Aebersold R."/>
            <person name="Robbe-Austerman S."/>
            <person name="Gordon S.V."/>
        </authorList>
    </citation>
    <scope>NUCLEOTIDE SEQUENCE [LARGE SCALE GENOMIC DNA]</scope>
    <scope>GENOME REANNOTATION</scope>
    <source>
        <strain>ATCC BAA-935 / AF2122/97</strain>
    </source>
</reference>
<comment type="function">
    <text evidence="1">Protease that hydrolyzes the covalent CysO-cysteine adduct synthesized by CysM to release L-cysteine and regenerate CysO.</text>
</comment>
<comment type="catalytic activity">
    <reaction evidence="1">
        <text>[CysO sulfur-carrier protein]-Gly-NH-CH2-C(O)-S-L-Cys + H2O = [CysO sulfur-carrier protein]-C-terminal Gly-Gly + L-cysteine + H(+)</text>
        <dbReference type="Rhea" id="RHEA:48732"/>
        <dbReference type="Rhea" id="RHEA-COMP:12207"/>
        <dbReference type="Rhea" id="RHEA-COMP:12212"/>
        <dbReference type="ChEBI" id="CHEBI:15377"/>
        <dbReference type="ChEBI" id="CHEBI:15378"/>
        <dbReference type="ChEBI" id="CHEBI:35235"/>
        <dbReference type="ChEBI" id="CHEBI:90778"/>
        <dbReference type="ChEBI" id="CHEBI:90783"/>
        <dbReference type="EC" id="3.13.1.6"/>
    </reaction>
</comment>
<comment type="cofactor">
    <cofactor evidence="1">
        <name>Zn(2+)</name>
        <dbReference type="ChEBI" id="CHEBI:29105"/>
    </cofactor>
</comment>
<comment type="pathway">
    <text>Amino-acid biosynthesis; L-cysteine biosynthesis.</text>
</comment>
<comment type="similarity">
    <text evidence="3">Belongs to the peptidase M67A family.</text>
</comment>
<feature type="chain" id="PRO_0000014096" description="CysO-cysteine peptidase">
    <location>
        <begin position="1"/>
        <end position="146"/>
    </location>
</feature>
<feature type="domain" description="MPN" evidence="2">
    <location>
        <begin position="11"/>
        <end position="134"/>
    </location>
</feature>
<feature type="short sequence motif" description="JAMM motif" evidence="2">
    <location>
        <begin position="88"/>
        <end position="101"/>
    </location>
</feature>
<feature type="binding site" evidence="2">
    <location>
        <position position="88"/>
    </location>
    <ligand>
        <name>Zn(2+)</name>
        <dbReference type="ChEBI" id="CHEBI:29105"/>
        <note>catalytic</note>
    </ligand>
</feature>
<feature type="binding site" evidence="2">
    <location>
        <position position="90"/>
    </location>
    <ligand>
        <name>Zn(2+)</name>
        <dbReference type="ChEBI" id="CHEBI:29105"/>
        <note>catalytic</note>
    </ligand>
</feature>
<feature type="binding site" evidence="2">
    <location>
        <position position="101"/>
    </location>
    <ligand>
        <name>Zn(2+)</name>
        <dbReference type="ChEBI" id="CHEBI:29105"/>
        <note>catalytic</note>
    </ligand>
</feature>
<protein>
    <recommendedName>
        <fullName>CysO-cysteine peptidase</fullName>
        <ecNumber evidence="1">3.13.1.6</ecNumber>
    </recommendedName>
    <alternativeName>
        <fullName>Metallocarboxypeptidase Mec</fullName>
    </alternativeName>
</protein>
<gene>
    <name type="primary">mec</name>
    <name type="ordered locus">BQ2027_MB1369</name>
</gene>
<evidence type="ECO:0000250" key="1">
    <source>
        <dbReference type="UniProtKB" id="P9WHS1"/>
    </source>
</evidence>
<evidence type="ECO:0000255" key="2">
    <source>
        <dbReference type="PROSITE-ProRule" id="PRU01182"/>
    </source>
</evidence>
<evidence type="ECO:0000305" key="3"/>
<dbReference type="EC" id="3.13.1.6" evidence="1"/>
<dbReference type="EMBL" id="LT708304">
    <property type="protein sequence ID" value="SIT99972.1"/>
    <property type="molecule type" value="Genomic_DNA"/>
</dbReference>
<dbReference type="RefSeq" id="NP_855023.1">
    <property type="nucleotide sequence ID" value="NC_002945.3"/>
</dbReference>
<dbReference type="RefSeq" id="WP_003898830.1">
    <property type="nucleotide sequence ID" value="NC_002945.4"/>
</dbReference>
<dbReference type="SMR" id="P64814"/>
<dbReference type="GeneID" id="45425312"/>
<dbReference type="KEGG" id="mbo:BQ2027_MB1369"/>
<dbReference type="PATRIC" id="fig|233413.5.peg.1501"/>
<dbReference type="UniPathway" id="UPA00136"/>
<dbReference type="Proteomes" id="UP000001419">
    <property type="component" value="Chromosome"/>
</dbReference>
<dbReference type="GO" id="GO:0008235">
    <property type="term" value="F:metalloexopeptidase activity"/>
    <property type="evidence" value="ECO:0007669"/>
    <property type="project" value="TreeGrafter"/>
</dbReference>
<dbReference type="GO" id="GO:0008270">
    <property type="term" value="F:zinc ion binding"/>
    <property type="evidence" value="ECO:0007669"/>
    <property type="project" value="TreeGrafter"/>
</dbReference>
<dbReference type="GO" id="GO:0019344">
    <property type="term" value="P:cysteine biosynthetic process"/>
    <property type="evidence" value="ECO:0007669"/>
    <property type="project" value="UniProtKB-UniPathway"/>
</dbReference>
<dbReference type="GO" id="GO:0006508">
    <property type="term" value="P:proteolysis"/>
    <property type="evidence" value="ECO:0007669"/>
    <property type="project" value="UniProtKB-KW"/>
</dbReference>
<dbReference type="CDD" id="cd08070">
    <property type="entry name" value="MPN_like"/>
    <property type="match status" value="1"/>
</dbReference>
<dbReference type="FunFam" id="3.40.140.10:FF:000048">
    <property type="entry name" value="CysO-cysteine peptidase"/>
    <property type="match status" value="1"/>
</dbReference>
<dbReference type="Gene3D" id="3.40.140.10">
    <property type="entry name" value="Cytidine Deaminase, domain 2"/>
    <property type="match status" value="1"/>
</dbReference>
<dbReference type="InterPro" id="IPR028090">
    <property type="entry name" value="JAB_dom_prok"/>
</dbReference>
<dbReference type="InterPro" id="IPR000555">
    <property type="entry name" value="JAMM/MPN+_dom"/>
</dbReference>
<dbReference type="InterPro" id="IPR037518">
    <property type="entry name" value="MPN"/>
</dbReference>
<dbReference type="InterPro" id="IPR051929">
    <property type="entry name" value="VirAsm_ModProt"/>
</dbReference>
<dbReference type="PANTHER" id="PTHR34858">
    <property type="entry name" value="CYSO-CYSTEINE PEPTIDASE"/>
    <property type="match status" value="1"/>
</dbReference>
<dbReference type="PANTHER" id="PTHR34858:SF1">
    <property type="entry name" value="CYSO-CYSTEINE PEPTIDASE"/>
    <property type="match status" value="1"/>
</dbReference>
<dbReference type="Pfam" id="PF14464">
    <property type="entry name" value="Prok-JAB"/>
    <property type="match status" value="1"/>
</dbReference>
<dbReference type="SMART" id="SM00232">
    <property type="entry name" value="JAB_MPN"/>
    <property type="match status" value="1"/>
</dbReference>
<dbReference type="SUPFAM" id="SSF102712">
    <property type="entry name" value="JAB1/MPN domain"/>
    <property type="match status" value="1"/>
</dbReference>
<dbReference type="PROSITE" id="PS50249">
    <property type="entry name" value="MPN"/>
    <property type="match status" value="1"/>
</dbReference>
<keyword id="KW-0028">Amino-acid biosynthesis</keyword>
<keyword id="KW-0198">Cysteine biosynthesis</keyword>
<keyword id="KW-0378">Hydrolase</keyword>
<keyword id="KW-0479">Metal-binding</keyword>
<keyword id="KW-0482">Metalloprotease</keyword>
<keyword id="KW-0645">Protease</keyword>
<keyword id="KW-1185">Reference proteome</keyword>
<keyword id="KW-0862">Zinc</keyword>
<accession>P64814</accession>
<accession>A0A1R3XY19</accession>
<accession>Q10645</accession>
<accession>X2BHM6</accession>
<name>MEC_MYCBO</name>
<organism>
    <name type="scientific">Mycobacterium bovis (strain ATCC BAA-935 / AF2122/97)</name>
    <dbReference type="NCBI Taxonomy" id="233413"/>
    <lineage>
        <taxon>Bacteria</taxon>
        <taxon>Bacillati</taxon>
        <taxon>Actinomycetota</taxon>
        <taxon>Actinomycetes</taxon>
        <taxon>Mycobacteriales</taxon>
        <taxon>Mycobacteriaceae</taxon>
        <taxon>Mycobacterium</taxon>
        <taxon>Mycobacterium tuberculosis complex</taxon>
    </lineage>
</organism>
<proteinExistence type="inferred from homology"/>